<keyword id="KW-0687">Ribonucleoprotein</keyword>
<keyword id="KW-0689">Ribosomal protein</keyword>
<keyword id="KW-0694">RNA-binding</keyword>
<keyword id="KW-0699">rRNA-binding</keyword>
<organism>
    <name type="scientific">Helicobacter acinonychis (strain Sheeba)</name>
    <dbReference type="NCBI Taxonomy" id="382638"/>
    <lineage>
        <taxon>Bacteria</taxon>
        <taxon>Pseudomonadati</taxon>
        <taxon>Campylobacterota</taxon>
        <taxon>Epsilonproteobacteria</taxon>
        <taxon>Campylobacterales</taxon>
        <taxon>Helicobacteraceae</taxon>
        <taxon>Helicobacter</taxon>
    </lineage>
</organism>
<accession>Q17ZD4</accession>
<protein>
    <recommendedName>
        <fullName evidence="1">Small ribosomal subunit protein uS19</fullName>
    </recommendedName>
    <alternativeName>
        <fullName evidence="2">30S ribosomal protein S19</fullName>
    </alternativeName>
</protein>
<feature type="chain" id="PRO_1000051058" description="Small ribosomal subunit protein uS19">
    <location>
        <begin position="1"/>
        <end position="93"/>
    </location>
</feature>
<sequence>MSRSIKKGPFIDDHLMKKTLKAKESKDNRPIKTWSRRSTILPEMIGFTYNVHNGRVFIPVYITENHVGYKLGEFAPTRTFKGHKGSVQKKIGK</sequence>
<comment type="function">
    <text evidence="1">Protein S19 forms a complex with S13 that binds strongly to the 16S ribosomal RNA.</text>
</comment>
<comment type="similarity">
    <text evidence="1">Belongs to the universal ribosomal protein uS19 family.</text>
</comment>
<gene>
    <name evidence="1" type="primary">rpsS</name>
    <name type="ordered locus">Hac_0140</name>
</gene>
<evidence type="ECO:0000255" key="1">
    <source>
        <dbReference type="HAMAP-Rule" id="MF_00531"/>
    </source>
</evidence>
<evidence type="ECO:0000305" key="2"/>
<dbReference type="EMBL" id="AM260522">
    <property type="protein sequence ID" value="CAJ98992.1"/>
    <property type="molecule type" value="Genomic_DNA"/>
</dbReference>
<dbReference type="RefSeq" id="WP_011577112.1">
    <property type="nucleotide sequence ID" value="NC_008229.1"/>
</dbReference>
<dbReference type="SMR" id="Q17ZD4"/>
<dbReference type="STRING" id="382638.Hac_0140"/>
<dbReference type="GeneID" id="31757669"/>
<dbReference type="KEGG" id="hac:Hac_0140"/>
<dbReference type="eggNOG" id="COG0185">
    <property type="taxonomic scope" value="Bacteria"/>
</dbReference>
<dbReference type="HOGENOM" id="CLU_144911_0_1_7"/>
<dbReference type="OrthoDB" id="9797833at2"/>
<dbReference type="BioCyc" id="HACI382638:HAC_RS00600-MONOMER"/>
<dbReference type="Proteomes" id="UP000000775">
    <property type="component" value="Chromosome"/>
</dbReference>
<dbReference type="GO" id="GO:0005737">
    <property type="term" value="C:cytoplasm"/>
    <property type="evidence" value="ECO:0007669"/>
    <property type="project" value="UniProtKB-ARBA"/>
</dbReference>
<dbReference type="GO" id="GO:0015935">
    <property type="term" value="C:small ribosomal subunit"/>
    <property type="evidence" value="ECO:0007669"/>
    <property type="project" value="InterPro"/>
</dbReference>
<dbReference type="GO" id="GO:0019843">
    <property type="term" value="F:rRNA binding"/>
    <property type="evidence" value="ECO:0007669"/>
    <property type="project" value="UniProtKB-UniRule"/>
</dbReference>
<dbReference type="GO" id="GO:0003735">
    <property type="term" value="F:structural constituent of ribosome"/>
    <property type="evidence" value="ECO:0007669"/>
    <property type="project" value="InterPro"/>
</dbReference>
<dbReference type="GO" id="GO:0000028">
    <property type="term" value="P:ribosomal small subunit assembly"/>
    <property type="evidence" value="ECO:0007669"/>
    <property type="project" value="TreeGrafter"/>
</dbReference>
<dbReference type="GO" id="GO:0006412">
    <property type="term" value="P:translation"/>
    <property type="evidence" value="ECO:0007669"/>
    <property type="project" value="UniProtKB-UniRule"/>
</dbReference>
<dbReference type="FunFam" id="3.30.860.10:FF:000001">
    <property type="entry name" value="30S ribosomal protein S19"/>
    <property type="match status" value="1"/>
</dbReference>
<dbReference type="Gene3D" id="3.30.860.10">
    <property type="entry name" value="30s Ribosomal Protein S19, Chain A"/>
    <property type="match status" value="1"/>
</dbReference>
<dbReference type="HAMAP" id="MF_00531">
    <property type="entry name" value="Ribosomal_uS19"/>
    <property type="match status" value="1"/>
</dbReference>
<dbReference type="InterPro" id="IPR002222">
    <property type="entry name" value="Ribosomal_uS19"/>
</dbReference>
<dbReference type="InterPro" id="IPR005732">
    <property type="entry name" value="Ribosomal_uS19_bac-type"/>
</dbReference>
<dbReference type="InterPro" id="IPR020934">
    <property type="entry name" value="Ribosomal_uS19_CS"/>
</dbReference>
<dbReference type="InterPro" id="IPR023575">
    <property type="entry name" value="Ribosomal_uS19_SF"/>
</dbReference>
<dbReference type="NCBIfam" id="TIGR01050">
    <property type="entry name" value="rpsS_bact"/>
    <property type="match status" value="1"/>
</dbReference>
<dbReference type="PANTHER" id="PTHR11880">
    <property type="entry name" value="RIBOSOMAL PROTEIN S19P FAMILY MEMBER"/>
    <property type="match status" value="1"/>
</dbReference>
<dbReference type="PANTHER" id="PTHR11880:SF8">
    <property type="entry name" value="SMALL RIBOSOMAL SUBUNIT PROTEIN US19M"/>
    <property type="match status" value="1"/>
</dbReference>
<dbReference type="Pfam" id="PF00203">
    <property type="entry name" value="Ribosomal_S19"/>
    <property type="match status" value="1"/>
</dbReference>
<dbReference type="PIRSF" id="PIRSF002144">
    <property type="entry name" value="Ribosomal_S19"/>
    <property type="match status" value="1"/>
</dbReference>
<dbReference type="PRINTS" id="PR00975">
    <property type="entry name" value="RIBOSOMALS19"/>
</dbReference>
<dbReference type="SUPFAM" id="SSF54570">
    <property type="entry name" value="Ribosomal protein S19"/>
    <property type="match status" value="1"/>
</dbReference>
<dbReference type="PROSITE" id="PS00323">
    <property type="entry name" value="RIBOSOMAL_S19"/>
    <property type="match status" value="1"/>
</dbReference>
<reference key="1">
    <citation type="journal article" date="2006" name="PLoS Genet.">
        <title>Who ate whom? Adaptive Helicobacter genomic changes that accompanied a host jump from early humans to large felines.</title>
        <authorList>
            <person name="Eppinger M."/>
            <person name="Baar C."/>
            <person name="Linz B."/>
            <person name="Raddatz G."/>
            <person name="Lanz C."/>
            <person name="Keller H."/>
            <person name="Morelli G."/>
            <person name="Gressmann H."/>
            <person name="Achtman M."/>
            <person name="Schuster S.C."/>
        </authorList>
    </citation>
    <scope>NUCLEOTIDE SEQUENCE [LARGE SCALE GENOMIC DNA]</scope>
    <source>
        <strain>Sheeba</strain>
    </source>
</reference>
<name>RS19_HELAH</name>
<proteinExistence type="inferred from homology"/>